<keyword id="KW-1185">Reference proteome</keyword>
<keyword id="KW-0694">RNA-binding</keyword>
<proteinExistence type="evidence at transcript level"/>
<accession>Q9M8N2</accession>
<organism>
    <name type="scientific">Arabidopsis thaliana</name>
    <name type="common">Mouse-ear cress</name>
    <dbReference type="NCBI Taxonomy" id="3702"/>
    <lineage>
        <taxon>Eukaryota</taxon>
        <taxon>Viridiplantae</taxon>
        <taxon>Streptophyta</taxon>
        <taxon>Embryophyta</taxon>
        <taxon>Tracheophyta</taxon>
        <taxon>Spermatophyta</taxon>
        <taxon>Magnoliopsida</taxon>
        <taxon>eudicotyledons</taxon>
        <taxon>Gunneridae</taxon>
        <taxon>Pentapetalae</taxon>
        <taxon>rosids</taxon>
        <taxon>malvids</taxon>
        <taxon>Brassicales</taxon>
        <taxon>Brassicaceae</taxon>
        <taxon>Camelineae</taxon>
        <taxon>Arabidopsis</taxon>
    </lineage>
</organism>
<evidence type="ECO:0000255" key="1">
    <source>
        <dbReference type="PROSITE-ProRule" id="PRU00266"/>
    </source>
</evidence>
<evidence type="ECO:0000256" key="2">
    <source>
        <dbReference type="SAM" id="MobiDB-lite"/>
    </source>
</evidence>
<gene>
    <name type="primary">RTL1</name>
    <name type="ordered locus">At1g80650</name>
    <name type="ORF">T21F11.2</name>
</gene>
<name>RTL1_ARATH</name>
<dbReference type="EMBL" id="AC018849">
    <property type="protein sequence ID" value="AAF27126.1"/>
    <property type="molecule type" value="Genomic_DNA"/>
</dbReference>
<dbReference type="EMBL" id="CP002684">
    <property type="protein sequence ID" value="AEE36432.1"/>
    <property type="molecule type" value="Genomic_DNA"/>
</dbReference>
<dbReference type="EMBL" id="AK117343">
    <property type="protein sequence ID" value="BAC42013.1"/>
    <property type="molecule type" value="mRNA"/>
</dbReference>
<dbReference type="EMBL" id="BT005219">
    <property type="protein sequence ID" value="AAO63283.1"/>
    <property type="molecule type" value="mRNA"/>
</dbReference>
<dbReference type="PIR" id="G96838">
    <property type="entry name" value="G96838"/>
</dbReference>
<dbReference type="RefSeq" id="NP_178180.1">
    <property type="nucleotide sequence ID" value="NM_106713.4"/>
</dbReference>
<dbReference type="SMR" id="Q9M8N2"/>
<dbReference type="BioGRID" id="29622">
    <property type="interactions" value="6"/>
</dbReference>
<dbReference type="FunCoup" id="Q9M8N2">
    <property type="interactions" value="140"/>
</dbReference>
<dbReference type="IntAct" id="Q9M8N2">
    <property type="interactions" value="7"/>
</dbReference>
<dbReference type="STRING" id="3702.Q9M8N2"/>
<dbReference type="PaxDb" id="3702-AT1G80650.1"/>
<dbReference type="ProteomicsDB" id="226633"/>
<dbReference type="EnsemblPlants" id="AT1G80650.1">
    <property type="protein sequence ID" value="AT1G80650.1"/>
    <property type="gene ID" value="AT1G80650"/>
</dbReference>
<dbReference type="GeneID" id="844404"/>
<dbReference type="Gramene" id="AT1G80650.1">
    <property type="protein sequence ID" value="AT1G80650.1"/>
    <property type="gene ID" value="AT1G80650"/>
</dbReference>
<dbReference type="KEGG" id="ath:AT1G80650"/>
<dbReference type="Araport" id="AT1G80650"/>
<dbReference type="TAIR" id="AT1G80650">
    <property type="gene designation" value="RTL1"/>
</dbReference>
<dbReference type="eggNOG" id="ENOG502S4Z9">
    <property type="taxonomic scope" value="Eukaryota"/>
</dbReference>
<dbReference type="HOGENOM" id="CLU_117360_0_0_1"/>
<dbReference type="InParanoid" id="Q9M8N2"/>
<dbReference type="PhylomeDB" id="Q9M8N2"/>
<dbReference type="PRO" id="PR:Q9M8N2"/>
<dbReference type="Proteomes" id="UP000006548">
    <property type="component" value="Chromosome 1"/>
</dbReference>
<dbReference type="ExpressionAtlas" id="Q9M8N2">
    <property type="expression patterns" value="baseline and differential"/>
</dbReference>
<dbReference type="GO" id="GO:0003723">
    <property type="term" value="F:RNA binding"/>
    <property type="evidence" value="ECO:0007669"/>
    <property type="project" value="UniProtKB-KW"/>
</dbReference>
<dbReference type="CDD" id="cd19869">
    <property type="entry name" value="DSRM_DCL_plant"/>
    <property type="match status" value="1"/>
</dbReference>
<dbReference type="Gene3D" id="3.30.160.20">
    <property type="match status" value="1"/>
</dbReference>
<dbReference type="InterPro" id="IPR014720">
    <property type="entry name" value="dsRBD_dom"/>
</dbReference>
<dbReference type="InterPro" id="IPR051247">
    <property type="entry name" value="RLC_Component"/>
</dbReference>
<dbReference type="PANTHER" id="PTHR46205">
    <property type="entry name" value="LOQUACIOUS, ISOFORM B"/>
    <property type="match status" value="1"/>
</dbReference>
<dbReference type="PANTHER" id="PTHR46205:SF3">
    <property type="entry name" value="LOQUACIOUS, ISOFORM B"/>
    <property type="match status" value="1"/>
</dbReference>
<dbReference type="Pfam" id="PF14709">
    <property type="entry name" value="DND1_DSRM"/>
    <property type="match status" value="1"/>
</dbReference>
<dbReference type="SMART" id="SM00358">
    <property type="entry name" value="DSRM"/>
    <property type="match status" value="1"/>
</dbReference>
<dbReference type="SUPFAM" id="SSF54768">
    <property type="entry name" value="dsRNA-binding domain-like"/>
    <property type="match status" value="1"/>
</dbReference>
<dbReference type="PROSITE" id="PS50137">
    <property type="entry name" value="DS_RBD"/>
    <property type="match status" value="1"/>
</dbReference>
<protein>
    <recommendedName>
        <fullName>Ribonuclease 3-like protein 1</fullName>
    </recommendedName>
    <alternativeName>
        <fullName>Ribonuclease III-like protein 1</fullName>
        <shortName>RNase III-like protein 1</shortName>
    </alternativeName>
    <alternativeName>
        <fullName>Ribonuclease three-like protein 1</fullName>
    </alternativeName>
</protein>
<reference key="1">
    <citation type="journal article" date="2000" name="Nature">
        <title>Sequence and analysis of chromosome 1 of the plant Arabidopsis thaliana.</title>
        <authorList>
            <person name="Theologis A."/>
            <person name="Ecker J.R."/>
            <person name="Palm C.J."/>
            <person name="Federspiel N.A."/>
            <person name="Kaul S."/>
            <person name="White O."/>
            <person name="Alonso J."/>
            <person name="Altafi H."/>
            <person name="Araujo R."/>
            <person name="Bowman C.L."/>
            <person name="Brooks S.Y."/>
            <person name="Buehler E."/>
            <person name="Chan A."/>
            <person name="Chao Q."/>
            <person name="Chen H."/>
            <person name="Cheuk R.F."/>
            <person name="Chin C.W."/>
            <person name="Chung M.K."/>
            <person name="Conn L."/>
            <person name="Conway A.B."/>
            <person name="Conway A.R."/>
            <person name="Creasy T.H."/>
            <person name="Dewar K."/>
            <person name="Dunn P."/>
            <person name="Etgu P."/>
            <person name="Feldblyum T.V."/>
            <person name="Feng J.-D."/>
            <person name="Fong B."/>
            <person name="Fujii C.Y."/>
            <person name="Gill J.E."/>
            <person name="Goldsmith A.D."/>
            <person name="Haas B."/>
            <person name="Hansen N.F."/>
            <person name="Hughes B."/>
            <person name="Huizar L."/>
            <person name="Hunter J.L."/>
            <person name="Jenkins J."/>
            <person name="Johnson-Hopson C."/>
            <person name="Khan S."/>
            <person name="Khaykin E."/>
            <person name="Kim C.J."/>
            <person name="Koo H.L."/>
            <person name="Kremenetskaia I."/>
            <person name="Kurtz D.B."/>
            <person name="Kwan A."/>
            <person name="Lam B."/>
            <person name="Langin-Hooper S."/>
            <person name="Lee A."/>
            <person name="Lee J.M."/>
            <person name="Lenz C.A."/>
            <person name="Li J.H."/>
            <person name="Li Y.-P."/>
            <person name="Lin X."/>
            <person name="Liu S.X."/>
            <person name="Liu Z.A."/>
            <person name="Luros J.S."/>
            <person name="Maiti R."/>
            <person name="Marziali A."/>
            <person name="Militscher J."/>
            <person name="Miranda M."/>
            <person name="Nguyen M."/>
            <person name="Nierman W.C."/>
            <person name="Osborne B.I."/>
            <person name="Pai G."/>
            <person name="Peterson J."/>
            <person name="Pham P.K."/>
            <person name="Rizzo M."/>
            <person name="Rooney T."/>
            <person name="Rowley D."/>
            <person name="Sakano H."/>
            <person name="Salzberg S.L."/>
            <person name="Schwartz J.R."/>
            <person name="Shinn P."/>
            <person name="Southwick A.M."/>
            <person name="Sun H."/>
            <person name="Tallon L.J."/>
            <person name="Tambunga G."/>
            <person name="Toriumi M.J."/>
            <person name="Town C.D."/>
            <person name="Utterback T."/>
            <person name="Van Aken S."/>
            <person name="Vaysberg M."/>
            <person name="Vysotskaia V.S."/>
            <person name="Walker M."/>
            <person name="Wu D."/>
            <person name="Yu G."/>
            <person name="Fraser C.M."/>
            <person name="Venter J.C."/>
            <person name="Davis R.W."/>
        </authorList>
    </citation>
    <scope>NUCLEOTIDE SEQUENCE [LARGE SCALE GENOMIC DNA]</scope>
    <source>
        <strain>cv. Columbia</strain>
    </source>
</reference>
<reference key="2">
    <citation type="journal article" date="2017" name="Plant J.">
        <title>Araport11: a complete reannotation of the Arabidopsis thaliana reference genome.</title>
        <authorList>
            <person name="Cheng C.Y."/>
            <person name="Krishnakumar V."/>
            <person name="Chan A.P."/>
            <person name="Thibaud-Nissen F."/>
            <person name="Schobel S."/>
            <person name="Town C.D."/>
        </authorList>
    </citation>
    <scope>GENOME REANNOTATION</scope>
    <source>
        <strain>cv. Columbia</strain>
    </source>
</reference>
<reference key="3">
    <citation type="journal article" date="2002" name="Science">
        <title>Functional annotation of a full-length Arabidopsis cDNA collection.</title>
        <authorList>
            <person name="Seki M."/>
            <person name="Narusaka M."/>
            <person name="Kamiya A."/>
            <person name="Ishida J."/>
            <person name="Satou M."/>
            <person name="Sakurai T."/>
            <person name="Nakajima M."/>
            <person name="Enju A."/>
            <person name="Akiyama K."/>
            <person name="Oono Y."/>
            <person name="Muramatsu M."/>
            <person name="Hayashizaki Y."/>
            <person name="Kawai J."/>
            <person name="Carninci P."/>
            <person name="Itoh M."/>
            <person name="Ishii Y."/>
            <person name="Arakawa T."/>
            <person name="Shibata K."/>
            <person name="Shinagawa A."/>
            <person name="Shinozaki K."/>
        </authorList>
    </citation>
    <scope>NUCLEOTIDE SEQUENCE [LARGE SCALE MRNA]</scope>
    <source>
        <strain>cv. Columbia</strain>
    </source>
</reference>
<reference key="4">
    <citation type="journal article" date="2003" name="Science">
        <title>Empirical analysis of transcriptional activity in the Arabidopsis genome.</title>
        <authorList>
            <person name="Yamada K."/>
            <person name="Lim J."/>
            <person name="Dale J.M."/>
            <person name="Chen H."/>
            <person name="Shinn P."/>
            <person name="Palm C.J."/>
            <person name="Southwick A.M."/>
            <person name="Wu H.C."/>
            <person name="Kim C.J."/>
            <person name="Nguyen M."/>
            <person name="Pham P.K."/>
            <person name="Cheuk R.F."/>
            <person name="Karlin-Newmann G."/>
            <person name="Liu S.X."/>
            <person name="Lam B."/>
            <person name="Sakano H."/>
            <person name="Wu T."/>
            <person name="Yu G."/>
            <person name="Miranda M."/>
            <person name="Quach H.L."/>
            <person name="Tripp M."/>
            <person name="Chang C.H."/>
            <person name="Lee J.M."/>
            <person name="Toriumi M.J."/>
            <person name="Chan M.M."/>
            <person name="Tang C.C."/>
            <person name="Onodera C.S."/>
            <person name="Deng J.M."/>
            <person name="Akiyama K."/>
            <person name="Ansari Y."/>
            <person name="Arakawa T."/>
            <person name="Banh J."/>
            <person name="Banno F."/>
            <person name="Bowser L."/>
            <person name="Brooks S.Y."/>
            <person name="Carninci P."/>
            <person name="Chao Q."/>
            <person name="Choy N."/>
            <person name="Enju A."/>
            <person name="Goldsmith A.D."/>
            <person name="Gurjal M."/>
            <person name="Hansen N.F."/>
            <person name="Hayashizaki Y."/>
            <person name="Johnson-Hopson C."/>
            <person name="Hsuan V.W."/>
            <person name="Iida K."/>
            <person name="Karnes M."/>
            <person name="Khan S."/>
            <person name="Koesema E."/>
            <person name="Ishida J."/>
            <person name="Jiang P.X."/>
            <person name="Jones T."/>
            <person name="Kawai J."/>
            <person name="Kamiya A."/>
            <person name="Meyers C."/>
            <person name="Nakajima M."/>
            <person name="Narusaka M."/>
            <person name="Seki M."/>
            <person name="Sakurai T."/>
            <person name="Satou M."/>
            <person name="Tamse R."/>
            <person name="Vaysberg M."/>
            <person name="Wallender E.K."/>
            <person name="Wong C."/>
            <person name="Yamamura Y."/>
            <person name="Yuan S."/>
            <person name="Shinozaki K."/>
            <person name="Davis R.W."/>
            <person name="Theologis A."/>
            <person name="Ecker J.R."/>
        </authorList>
    </citation>
    <scope>NUCLEOTIDE SEQUENCE [LARGE SCALE MRNA]</scope>
    <source>
        <strain>cv. Columbia</strain>
    </source>
</reference>
<sequence>MEDQETKRITKKPSRSIIISLKDIPPLDPSSIPSMKPMAQDHHNVGMQRFQEKTDFKFEEEDNAISSFSNIQIDPNSTRSISLEKKLAPKPDEEHTTTTKPISKDDESKTRRGSAKSVLHEMCASKRWRPPVYECCNVDGPCHLRLFTYKVMVEIRDSSGKTVLECFGDPRRKKKAAAEHAAEGALWYLEHVKTKPHQ</sequence>
<feature type="chain" id="PRO_0000404662" description="Ribonuclease 3-like protein 1">
    <location>
        <begin position="1"/>
        <end position="198"/>
    </location>
</feature>
<feature type="domain" description="DRBM" evidence="1">
    <location>
        <begin position="114"/>
        <end position="191"/>
    </location>
</feature>
<feature type="region of interest" description="Disordered" evidence="2">
    <location>
        <begin position="85"/>
        <end position="115"/>
    </location>
</feature>
<feature type="compositionally biased region" description="Basic and acidic residues" evidence="2">
    <location>
        <begin position="85"/>
        <end position="110"/>
    </location>
</feature>